<dbReference type="EC" id="4.2.1.77" evidence="3"/>
<dbReference type="EMBL" id="AE014291">
    <property type="protein sequence ID" value="AAN29286.1"/>
    <property type="molecule type" value="Genomic_DNA"/>
</dbReference>
<dbReference type="EMBL" id="CP002997">
    <property type="protein sequence ID" value="AEM17699.1"/>
    <property type="molecule type" value="Genomic_DNA"/>
</dbReference>
<dbReference type="RefSeq" id="WP_002966688.1">
    <property type="nucleotide sequence ID" value="NZ_KN046804.1"/>
</dbReference>
<dbReference type="SMR" id="Q8G2I3"/>
<dbReference type="KEGG" id="bms:BR0337"/>
<dbReference type="KEGG" id="bsi:BS1330_I0338"/>
<dbReference type="PATRIC" id="fig|204722.21.peg.2497"/>
<dbReference type="HOGENOM" id="CLU_036729_2_0_5"/>
<dbReference type="PhylomeDB" id="Q8G2I3"/>
<dbReference type="SABIO-RK" id="Q8G2I3"/>
<dbReference type="Proteomes" id="UP000007104">
    <property type="component" value="Chromosome I"/>
</dbReference>
<dbReference type="GO" id="GO:0047580">
    <property type="term" value="F:4-hydroxyproline epimerase activity"/>
    <property type="evidence" value="ECO:0007669"/>
    <property type="project" value="TreeGrafter"/>
</dbReference>
<dbReference type="GO" id="GO:0050346">
    <property type="term" value="F:trans-L-3-hydroxyproline dehydratase activity"/>
    <property type="evidence" value="ECO:0000314"/>
    <property type="project" value="CACAO"/>
</dbReference>
<dbReference type="FunFam" id="3.10.310.10:FF:000010">
    <property type="entry name" value="Proline racemase"/>
    <property type="match status" value="1"/>
</dbReference>
<dbReference type="Gene3D" id="3.10.310.10">
    <property type="entry name" value="Diaminopimelate Epimerase, Chain A, domain 1"/>
    <property type="match status" value="2"/>
</dbReference>
<dbReference type="InterPro" id="IPR008794">
    <property type="entry name" value="Pro_racemase_fam"/>
</dbReference>
<dbReference type="NCBIfam" id="NF047722">
    <property type="entry name" value="T3LHypDht"/>
    <property type="match status" value="1"/>
</dbReference>
<dbReference type="PANTHER" id="PTHR33442:SF5">
    <property type="entry name" value="BIFUNCTIONAL TRANS-3-HYDROXY-L-PROLINE DEHYDRATASE_2-EPIMERASE"/>
    <property type="match status" value="1"/>
</dbReference>
<dbReference type="PANTHER" id="PTHR33442">
    <property type="entry name" value="TRANS-3-HYDROXY-L-PROLINE DEHYDRATASE"/>
    <property type="match status" value="1"/>
</dbReference>
<dbReference type="Pfam" id="PF05544">
    <property type="entry name" value="Pro_racemase"/>
    <property type="match status" value="1"/>
</dbReference>
<dbReference type="PIRSF" id="PIRSF029792">
    <property type="entry name" value="Pro_racemase"/>
    <property type="match status" value="1"/>
</dbReference>
<dbReference type="SFLD" id="SFLDS00028">
    <property type="entry name" value="Proline_Racemase"/>
    <property type="match status" value="1"/>
</dbReference>
<dbReference type="SUPFAM" id="SSF54506">
    <property type="entry name" value="Diaminopimelate epimerase-like"/>
    <property type="match status" value="1"/>
</dbReference>
<keyword id="KW-0456">Lyase</keyword>
<reference key="1">
    <citation type="journal article" date="2002" name="Proc. Natl. Acad. Sci. U.S.A.">
        <title>The Brucella suis genome reveals fundamental similarities between animal and plant pathogens and symbionts.</title>
        <authorList>
            <person name="Paulsen I.T."/>
            <person name="Seshadri R."/>
            <person name="Nelson K.E."/>
            <person name="Eisen J.A."/>
            <person name="Heidelberg J.F."/>
            <person name="Read T.D."/>
            <person name="Dodson R.J."/>
            <person name="Umayam L.A."/>
            <person name="Brinkac L.M."/>
            <person name="Beanan M.J."/>
            <person name="Daugherty S.C."/>
            <person name="DeBoy R.T."/>
            <person name="Durkin A.S."/>
            <person name="Kolonay J.F."/>
            <person name="Madupu R."/>
            <person name="Nelson W.C."/>
            <person name="Ayodeji B."/>
            <person name="Kraul M."/>
            <person name="Shetty J."/>
            <person name="Malek J.A."/>
            <person name="Van Aken S.E."/>
            <person name="Riedmuller S."/>
            <person name="Tettelin H."/>
            <person name="Gill S.R."/>
            <person name="White O."/>
            <person name="Salzberg S.L."/>
            <person name="Hoover D.L."/>
            <person name="Lindler L.E."/>
            <person name="Halling S.M."/>
            <person name="Boyle S.M."/>
            <person name="Fraser C.M."/>
        </authorList>
    </citation>
    <scope>NUCLEOTIDE SEQUENCE [LARGE SCALE GENOMIC DNA]</scope>
    <source>
        <strain>1330</strain>
    </source>
</reference>
<reference key="2">
    <citation type="journal article" date="2011" name="J. Bacteriol.">
        <title>Revised genome sequence of Brucella suis 1330.</title>
        <authorList>
            <person name="Tae H."/>
            <person name="Shallom S."/>
            <person name="Settlage R."/>
            <person name="Preston D."/>
            <person name="Adams L.G."/>
            <person name="Garner H.R."/>
        </authorList>
    </citation>
    <scope>NUCLEOTIDE SEQUENCE [LARGE SCALE GENOMIC DNA]</scope>
    <source>
        <strain>1330</strain>
    </source>
</reference>
<reference key="3">
    <citation type="journal article" date="2007" name="PLoS ONE">
        <title>Molecular and structural discrimination of proline racemase and hydroxyproline-2-epimerase from nosocomial and bacterial pathogens.</title>
        <authorList>
            <person name="Goytia M."/>
            <person name="Chamond N."/>
            <person name="Cosson A."/>
            <person name="Coatnoan N."/>
            <person name="Hermant D."/>
            <person name="Berneman A."/>
            <person name="Minoprio P."/>
        </authorList>
    </citation>
    <scope>LACK OF ENZYMATIC ACTIVITY AS PROLINE RACEMASE AND HYDROXYPROLINE 2-EPIMERASE</scope>
    <source>
        <strain>1330</strain>
    </source>
</reference>
<reference key="4">
    <citation type="journal article" date="2014" name="Elife">
        <title>Prediction and characterization of enzymatic activities guided by sequence similarity and genome neighborhood networks.</title>
        <authorList>
            <person name="Zhao S."/>
            <person name="Sakai A."/>
            <person name="Zhang X."/>
            <person name="Vetting M.W."/>
            <person name="Kumar R."/>
            <person name="Hillerich B."/>
            <person name="San Francisco B."/>
            <person name="Solbiati J."/>
            <person name="Steves A."/>
            <person name="Brown S."/>
            <person name="Akiva E."/>
            <person name="Barber A."/>
            <person name="Seidel R.D."/>
            <person name="Babbitt P.C."/>
            <person name="Almo S.C."/>
            <person name="Gerlt J.A."/>
            <person name="Jacobson M.P."/>
        </authorList>
    </citation>
    <scope>FUNCTION</scope>
    <scope>CATALYTIC ACTIVITY</scope>
    <scope>BIOPHYSICOCHEMICAL PROPERTIES</scope>
</reference>
<feature type="chain" id="PRO_0000354045" description="Trans-3-hydroxy-L-proline dehydratase">
    <location>
        <begin position="1"/>
        <end position="342"/>
    </location>
</feature>
<feature type="active site" description="Proton acceptor" evidence="1">
    <location>
        <position position="90"/>
    </location>
</feature>
<feature type="binding site" evidence="1">
    <location>
        <begin position="91"/>
        <end position="92"/>
    </location>
    <ligand>
        <name>substrate</name>
    </ligand>
</feature>
<feature type="binding site" evidence="1">
    <location>
        <position position="251"/>
    </location>
    <ligand>
        <name>substrate</name>
    </ligand>
</feature>
<feature type="binding site" evidence="1">
    <location>
        <begin position="256"/>
        <end position="257"/>
    </location>
    <ligand>
        <name>substrate</name>
    </ligand>
</feature>
<name>T3HPD_BRUSU</name>
<sequence>MRSTKVIHIVGCHAEGEVGDVIVGGVAPPPGETVWEQSRFIANDETLRNFVLNEPRGGVFRHVNLLVPPKDPRAQMGFIIMEPADTPPMSGSNSICVSTVLLDSGIIAMQEPVTHMVLEAPGGIIEVEAECRNGKAERISVRNVPSFADRLDAPLDVTGLGTIMVDTAYGGDSFVIVDAAQIGMKIEPGQARELAEIGVKITKAANEQLGFRHPERDWRHISFCQITEPVTREGDVLTGVNTVAIRPAKLDRSPTGTGCSARMAVLHAKGQMKAGERFIGKSVLGTEFHCRLDKVLELGGKPAISPIISGRAWVTGTSQLMLDPSDPFPHGYRLSDTWPRDE</sequence>
<comment type="function">
    <text evidence="2 3">Catalyzes the dehydration of trans-3-hydroxy-L-proline (t3LHyp) to Delta(1)-pyrroline-2-carboxylate (Pyr2C) (PubMed:24980702). Displays neither proline racemase activity nor 4-hydroxyproline 2-epimerase activity (PubMed:17849014, PubMed:24980702).</text>
</comment>
<comment type="catalytic activity">
    <reaction evidence="3">
        <text>trans-3-hydroxy-L-proline = 1-pyrroline-2-carboxylate + H2O</text>
        <dbReference type="Rhea" id="RHEA:10320"/>
        <dbReference type="ChEBI" id="CHEBI:15377"/>
        <dbReference type="ChEBI" id="CHEBI:39785"/>
        <dbReference type="ChEBI" id="CHEBI:57938"/>
        <dbReference type="EC" id="4.2.1.77"/>
    </reaction>
</comment>
<comment type="biophysicochemical properties">
    <kinetics>
        <KM evidence="3">5.1 mM for trans-3-hydroxy-L-proline</KM>
        <text evidence="3">kcat is 17 sec(-1) for t3LHyp dehydration.</text>
    </kinetics>
</comment>
<comment type="similarity">
    <text evidence="5">Belongs to the proline racemase family.</text>
</comment>
<evidence type="ECO:0000250" key="1">
    <source>
        <dbReference type="UniProtKB" id="B9K4G4"/>
    </source>
</evidence>
<evidence type="ECO:0000269" key="2">
    <source>
    </source>
</evidence>
<evidence type="ECO:0000269" key="3">
    <source>
    </source>
</evidence>
<evidence type="ECO:0000303" key="4">
    <source>
    </source>
</evidence>
<evidence type="ECO:0000305" key="5"/>
<organism>
    <name type="scientific">Brucella suis biovar 1 (strain 1330)</name>
    <dbReference type="NCBI Taxonomy" id="204722"/>
    <lineage>
        <taxon>Bacteria</taxon>
        <taxon>Pseudomonadati</taxon>
        <taxon>Pseudomonadota</taxon>
        <taxon>Alphaproteobacteria</taxon>
        <taxon>Hyphomicrobiales</taxon>
        <taxon>Brucellaceae</taxon>
        <taxon>Brucella/Ochrobactrum group</taxon>
        <taxon>Brucella</taxon>
    </lineage>
</organism>
<gene>
    <name type="ordered locus">BR0337</name>
    <name type="ordered locus">BS1330_I0338</name>
</gene>
<protein>
    <recommendedName>
        <fullName evidence="4">Trans-3-hydroxy-L-proline dehydratase</fullName>
        <shortName>T3LHyp dehydratase</shortName>
        <shortName evidence="4">t3HypD</shortName>
        <ecNumber evidence="3">4.2.1.77</ecNumber>
    </recommendedName>
    <alternativeName>
        <fullName>Trans-L-3-hydroxyproline dehydratase</fullName>
    </alternativeName>
</protein>
<proteinExistence type="evidence at protein level"/>
<accession>Q8G2I3</accession>
<accession>G0K693</accession>